<sequence length="25" mass="2871">LKCYSSRTETMTCPEGKDKCEKYAV</sequence>
<dbReference type="PIR" id="S68642">
    <property type="entry name" value="S68642"/>
</dbReference>
<dbReference type="SMR" id="Q9PRQ4"/>
<dbReference type="GO" id="GO:0005576">
    <property type="term" value="C:extracellular region"/>
    <property type="evidence" value="ECO:0007669"/>
    <property type="project" value="UniProtKB-SubCell"/>
</dbReference>
<dbReference type="GO" id="GO:0030550">
    <property type="term" value="F:acetylcholine receptor inhibitor activity"/>
    <property type="evidence" value="ECO:0007669"/>
    <property type="project" value="UniProtKB-KW"/>
</dbReference>
<dbReference type="GO" id="GO:0099106">
    <property type="term" value="F:ion channel regulator activity"/>
    <property type="evidence" value="ECO:0007669"/>
    <property type="project" value="UniProtKB-KW"/>
</dbReference>
<dbReference type="GO" id="GO:0090729">
    <property type="term" value="F:toxin activity"/>
    <property type="evidence" value="ECO:0007669"/>
    <property type="project" value="UniProtKB-KW"/>
</dbReference>
<dbReference type="Gene3D" id="2.10.60.10">
    <property type="entry name" value="CD59"/>
    <property type="match status" value="1"/>
</dbReference>
<dbReference type="InterPro" id="IPR045860">
    <property type="entry name" value="Snake_toxin-like_sf"/>
</dbReference>
<proteinExistence type="evidence at protein level"/>
<feature type="chain" id="PRO_0000408025" description="Nicotinic acetylcholine receptor-binding protein Mnn-4" evidence="2">
    <location>
        <begin position="1"/>
        <end position="25" status="greater than"/>
    </location>
</feature>
<feature type="disulfide bond" evidence="1">
    <location>
        <begin position="3"/>
        <end position="20"/>
    </location>
</feature>
<feature type="unsure residue">
    <location>
        <position position="3"/>
    </location>
</feature>
<feature type="unsure residue" description="Assigned by comparison with orthologs">
    <location>
        <position position="13"/>
    </location>
</feature>
<feature type="unsure residue" description="Assigned by comparison with orthologs">
    <location>
        <position position="20"/>
    </location>
</feature>
<feature type="non-terminal residue">
    <location>
        <position position="25"/>
    </location>
</feature>
<organism>
    <name type="scientific">Micrurus nigrocinctus</name>
    <name type="common">Central American coral snake</name>
    <name type="synonym">Gargantilla</name>
    <dbReference type="NCBI Taxonomy" id="8635"/>
    <lineage>
        <taxon>Eukaryota</taxon>
        <taxon>Metazoa</taxon>
        <taxon>Chordata</taxon>
        <taxon>Craniata</taxon>
        <taxon>Vertebrata</taxon>
        <taxon>Euteleostomi</taxon>
        <taxon>Lepidosauria</taxon>
        <taxon>Squamata</taxon>
        <taxon>Bifurcata</taxon>
        <taxon>Unidentata</taxon>
        <taxon>Episquamata</taxon>
        <taxon>Toxicofera</taxon>
        <taxon>Serpentes</taxon>
        <taxon>Colubroidea</taxon>
        <taxon>Elapidae</taxon>
        <taxon>Elapinae</taxon>
        <taxon>Micrurus</taxon>
    </lineage>
</organism>
<accession>Q9PRQ4</accession>
<comment type="function">
    <text evidence="2">Binds and may inhibit nicotinic acetylcholine receptors (nAChR).</text>
</comment>
<comment type="subcellular location">
    <subcellularLocation>
        <location evidence="2">Secreted</location>
    </subcellularLocation>
</comment>
<comment type="tissue specificity">
    <text evidence="4">Expressed by the venom gland.</text>
</comment>
<comment type="similarity">
    <text evidence="4">Belongs to the three-finger toxin family. Short-chain subfamily.</text>
</comment>
<protein>
    <recommendedName>
        <fullName evidence="3">Nicotinic acetylcholine receptor-binding protein Mnn-4</fullName>
    </recommendedName>
    <alternativeName>
        <fullName>Three-finger toxin</fullName>
        <shortName>3FTx</shortName>
    </alternativeName>
</protein>
<name>3SX4_MICNI</name>
<reference key="1">
    <citation type="journal article" date="1996" name="FEBS Lett.">
        <title>Characterization of multiple nicotinic acetylcholine receptor-binding proteins and phospholipases A2 from the venom of the coral snake Micrurus nigrocinctus.</title>
        <authorList>
            <person name="Alape-Giron A."/>
            <person name="Persson B."/>
            <person name="Cedelund E."/>
            <person name="Flores-Diaz M."/>
            <person name="Gutierrez J.-M."/>
            <person name="Thelestam M."/>
            <person name="Bergman T."/>
            <person name="Joernvall H."/>
        </authorList>
    </citation>
    <scope>PROTEIN SEQUENCE</scope>
    <scope>FUNCTION</scope>
    <scope>SUBCELLULAR LOCATION</scope>
    <source>
        <tissue>Venom</tissue>
    </source>
</reference>
<keyword id="KW-0008">Acetylcholine receptor inhibiting toxin</keyword>
<keyword id="KW-0903">Direct protein sequencing</keyword>
<keyword id="KW-1015">Disulfide bond</keyword>
<keyword id="KW-0872">Ion channel impairing toxin</keyword>
<keyword id="KW-0528">Neurotoxin</keyword>
<keyword id="KW-0629">Postsynaptic neurotoxin</keyword>
<keyword id="KW-0964">Secreted</keyword>
<keyword id="KW-0800">Toxin</keyword>
<evidence type="ECO:0000250" key="1">
    <source>
        <dbReference type="UniProtKB" id="P60301"/>
    </source>
</evidence>
<evidence type="ECO:0000269" key="2">
    <source>
    </source>
</evidence>
<evidence type="ECO:0000303" key="3">
    <source>
    </source>
</evidence>
<evidence type="ECO:0000305" key="4"/>